<dbReference type="EC" id="2.1.1.107" evidence="1"/>
<dbReference type="EC" id="1.3.1.76" evidence="1"/>
<dbReference type="EC" id="4.99.1.4" evidence="1"/>
<dbReference type="EMBL" id="CP001396">
    <property type="protein sequence ID" value="ACR63253.1"/>
    <property type="molecule type" value="Genomic_DNA"/>
</dbReference>
<dbReference type="RefSeq" id="WP_000349855.1">
    <property type="nucleotide sequence ID" value="NC_012759.1"/>
</dbReference>
<dbReference type="SMR" id="C4ZUM4"/>
<dbReference type="GeneID" id="75173526"/>
<dbReference type="KEGG" id="ebw:BWG_3060"/>
<dbReference type="HOGENOM" id="CLU_011276_2_0_6"/>
<dbReference type="UniPathway" id="UPA00148">
    <property type="reaction ID" value="UER00211"/>
</dbReference>
<dbReference type="UniPathway" id="UPA00148">
    <property type="reaction ID" value="UER00222"/>
</dbReference>
<dbReference type="UniPathway" id="UPA00262">
    <property type="reaction ID" value="UER00211"/>
</dbReference>
<dbReference type="UniPathway" id="UPA00262">
    <property type="reaction ID" value="UER00222"/>
</dbReference>
<dbReference type="UniPathway" id="UPA00262">
    <property type="reaction ID" value="UER00376"/>
</dbReference>
<dbReference type="GO" id="GO:0051287">
    <property type="term" value="F:NAD binding"/>
    <property type="evidence" value="ECO:0007669"/>
    <property type="project" value="InterPro"/>
</dbReference>
<dbReference type="GO" id="GO:0043115">
    <property type="term" value="F:precorrin-2 dehydrogenase activity"/>
    <property type="evidence" value="ECO:0007669"/>
    <property type="project" value="UniProtKB-UniRule"/>
</dbReference>
<dbReference type="GO" id="GO:0051266">
    <property type="term" value="F:sirohydrochlorin ferrochelatase activity"/>
    <property type="evidence" value="ECO:0007669"/>
    <property type="project" value="UniProtKB-EC"/>
</dbReference>
<dbReference type="GO" id="GO:0004851">
    <property type="term" value="F:uroporphyrin-III C-methyltransferase activity"/>
    <property type="evidence" value="ECO:0007669"/>
    <property type="project" value="UniProtKB-UniRule"/>
</dbReference>
<dbReference type="GO" id="GO:0009236">
    <property type="term" value="P:cobalamin biosynthetic process"/>
    <property type="evidence" value="ECO:0007669"/>
    <property type="project" value="UniProtKB-UniRule"/>
</dbReference>
<dbReference type="GO" id="GO:0032259">
    <property type="term" value="P:methylation"/>
    <property type="evidence" value="ECO:0007669"/>
    <property type="project" value="UniProtKB-KW"/>
</dbReference>
<dbReference type="GO" id="GO:0019354">
    <property type="term" value="P:siroheme biosynthetic process"/>
    <property type="evidence" value="ECO:0007669"/>
    <property type="project" value="UniProtKB-UniRule"/>
</dbReference>
<dbReference type="CDD" id="cd11642">
    <property type="entry name" value="SUMT"/>
    <property type="match status" value="1"/>
</dbReference>
<dbReference type="FunFam" id="1.10.8.210:FF:000001">
    <property type="entry name" value="Siroheme synthase"/>
    <property type="match status" value="1"/>
</dbReference>
<dbReference type="FunFam" id="3.30.160.110:FF:000001">
    <property type="entry name" value="Siroheme synthase"/>
    <property type="match status" value="1"/>
</dbReference>
<dbReference type="FunFam" id="3.30.950.10:FF:000001">
    <property type="entry name" value="Siroheme synthase"/>
    <property type="match status" value="1"/>
</dbReference>
<dbReference type="FunFam" id="3.40.1010.10:FF:000001">
    <property type="entry name" value="Siroheme synthase"/>
    <property type="match status" value="1"/>
</dbReference>
<dbReference type="FunFam" id="3.40.50.720:FF:000092">
    <property type="entry name" value="Siroheme synthase"/>
    <property type="match status" value="1"/>
</dbReference>
<dbReference type="Gene3D" id="3.40.1010.10">
    <property type="entry name" value="Cobalt-precorrin-4 Transmethylase, Domain 1"/>
    <property type="match status" value="1"/>
</dbReference>
<dbReference type="Gene3D" id="3.30.950.10">
    <property type="entry name" value="Methyltransferase, Cobalt-precorrin-4 Transmethylase, Domain 2"/>
    <property type="match status" value="1"/>
</dbReference>
<dbReference type="Gene3D" id="3.40.50.720">
    <property type="entry name" value="NAD(P)-binding Rossmann-like Domain"/>
    <property type="match status" value="1"/>
</dbReference>
<dbReference type="Gene3D" id="1.10.8.210">
    <property type="entry name" value="Sirohaem synthase, dimerisation domain"/>
    <property type="match status" value="1"/>
</dbReference>
<dbReference type="Gene3D" id="3.30.160.110">
    <property type="entry name" value="Siroheme synthase, domain 2"/>
    <property type="match status" value="1"/>
</dbReference>
<dbReference type="HAMAP" id="MF_01646">
    <property type="entry name" value="Siroheme_synth"/>
    <property type="match status" value="1"/>
</dbReference>
<dbReference type="InterPro" id="IPR000878">
    <property type="entry name" value="4pyrrol_Mease"/>
</dbReference>
<dbReference type="InterPro" id="IPR035996">
    <property type="entry name" value="4pyrrol_Methylase_sf"/>
</dbReference>
<dbReference type="InterPro" id="IPR014777">
    <property type="entry name" value="4pyrrole_Mease_sub1"/>
</dbReference>
<dbReference type="InterPro" id="IPR014776">
    <property type="entry name" value="4pyrrole_Mease_sub2"/>
</dbReference>
<dbReference type="InterPro" id="IPR006366">
    <property type="entry name" value="CobA/CysG_C"/>
</dbReference>
<dbReference type="InterPro" id="IPR036291">
    <property type="entry name" value="NAD(P)-bd_dom_sf"/>
</dbReference>
<dbReference type="InterPro" id="IPR050161">
    <property type="entry name" value="Siro_Cobalamin_biosynth"/>
</dbReference>
<dbReference type="InterPro" id="IPR037115">
    <property type="entry name" value="Sirohaem_synt_dimer_dom_sf"/>
</dbReference>
<dbReference type="InterPro" id="IPR012409">
    <property type="entry name" value="Sirohaem_synth"/>
</dbReference>
<dbReference type="InterPro" id="IPR028281">
    <property type="entry name" value="Sirohaem_synthase_central"/>
</dbReference>
<dbReference type="InterPro" id="IPR019478">
    <property type="entry name" value="Sirohaem_synthase_dimer_dom"/>
</dbReference>
<dbReference type="InterPro" id="IPR006367">
    <property type="entry name" value="Sirohaem_synthase_N"/>
</dbReference>
<dbReference type="InterPro" id="IPR003043">
    <property type="entry name" value="Uropor_MeTrfase_CS"/>
</dbReference>
<dbReference type="NCBIfam" id="TIGR01469">
    <property type="entry name" value="cobA_cysG_Cterm"/>
    <property type="match status" value="1"/>
</dbReference>
<dbReference type="NCBIfam" id="TIGR01470">
    <property type="entry name" value="cysG_Nterm"/>
    <property type="match status" value="1"/>
</dbReference>
<dbReference type="NCBIfam" id="NF004790">
    <property type="entry name" value="PRK06136.1"/>
    <property type="match status" value="1"/>
</dbReference>
<dbReference type="NCBIfam" id="NF007922">
    <property type="entry name" value="PRK10637.1"/>
    <property type="match status" value="1"/>
</dbReference>
<dbReference type="PANTHER" id="PTHR45790:SF1">
    <property type="entry name" value="SIROHEME SYNTHASE"/>
    <property type="match status" value="1"/>
</dbReference>
<dbReference type="PANTHER" id="PTHR45790">
    <property type="entry name" value="SIROHEME SYNTHASE-RELATED"/>
    <property type="match status" value="1"/>
</dbReference>
<dbReference type="Pfam" id="PF10414">
    <property type="entry name" value="CysG_dimeriser"/>
    <property type="match status" value="1"/>
</dbReference>
<dbReference type="Pfam" id="PF13241">
    <property type="entry name" value="NAD_binding_7"/>
    <property type="match status" value="1"/>
</dbReference>
<dbReference type="Pfam" id="PF14824">
    <property type="entry name" value="Sirohm_synth_M"/>
    <property type="match status" value="1"/>
</dbReference>
<dbReference type="Pfam" id="PF00590">
    <property type="entry name" value="TP_methylase"/>
    <property type="match status" value="1"/>
</dbReference>
<dbReference type="PIRSF" id="PIRSF036426">
    <property type="entry name" value="Sirohaem_synth"/>
    <property type="match status" value="1"/>
</dbReference>
<dbReference type="SUPFAM" id="SSF51735">
    <property type="entry name" value="NAD(P)-binding Rossmann-fold domains"/>
    <property type="match status" value="1"/>
</dbReference>
<dbReference type="SUPFAM" id="SSF75615">
    <property type="entry name" value="Siroheme synthase middle domains-like"/>
    <property type="match status" value="1"/>
</dbReference>
<dbReference type="SUPFAM" id="SSF53790">
    <property type="entry name" value="Tetrapyrrole methylase"/>
    <property type="match status" value="1"/>
</dbReference>
<dbReference type="PROSITE" id="PS00839">
    <property type="entry name" value="SUMT_1"/>
    <property type="match status" value="1"/>
</dbReference>
<dbReference type="PROSITE" id="PS00840">
    <property type="entry name" value="SUMT_2"/>
    <property type="match status" value="1"/>
</dbReference>
<protein>
    <recommendedName>
        <fullName evidence="1">Siroheme synthase</fullName>
    </recommendedName>
    <domain>
        <recommendedName>
            <fullName evidence="1">Uroporphyrinogen-III C-methyltransferase</fullName>
            <shortName evidence="1">Urogen III methylase</shortName>
            <ecNumber evidence="1">2.1.1.107</ecNumber>
        </recommendedName>
        <alternativeName>
            <fullName evidence="1">SUMT</fullName>
        </alternativeName>
        <alternativeName>
            <fullName evidence="1">Uroporphyrinogen III methylase</fullName>
            <shortName evidence="1">UROM</shortName>
        </alternativeName>
    </domain>
    <domain>
        <recommendedName>
            <fullName evidence="1">Precorrin-2 dehydrogenase</fullName>
            <ecNumber evidence="1">1.3.1.76</ecNumber>
        </recommendedName>
    </domain>
    <domain>
        <recommendedName>
            <fullName evidence="1">Sirohydrochlorin ferrochelatase</fullName>
            <ecNumber evidence="1">4.99.1.4</ecNumber>
        </recommendedName>
    </domain>
</protein>
<reference key="1">
    <citation type="journal article" date="2009" name="J. Bacteriol.">
        <title>Genomic sequencing reveals regulatory mutations and recombinational events in the widely used MC4100 lineage of Escherichia coli K-12.</title>
        <authorList>
            <person name="Ferenci T."/>
            <person name="Zhou Z."/>
            <person name="Betteridge T."/>
            <person name="Ren Y."/>
            <person name="Liu Y."/>
            <person name="Feng L."/>
            <person name="Reeves P.R."/>
            <person name="Wang L."/>
        </authorList>
    </citation>
    <scope>NUCLEOTIDE SEQUENCE [LARGE SCALE GENOMIC DNA]</scope>
    <source>
        <strain>K12 / MC4100 / BW2952</strain>
    </source>
</reference>
<proteinExistence type="inferred from homology"/>
<name>CYSG_ECOBW</name>
<feature type="chain" id="PRO_1000215845" description="Siroheme synthase">
    <location>
        <begin position="1"/>
        <end position="457"/>
    </location>
</feature>
<feature type="region of interest" description="Precorrin-2 dehydrogenase /sirohydrochlorin ferrochelatase" evidence="1">
    <location>
        <begin position="1"/>
        <end position="204"/>
    </location>
</feature>
<feature type="region of interest" description="Uroporphyrinogen-III C-methyltransferase" evidence="1">
    <location>
        <begin position="216"/>
        <end position="457"/>
    </location>
</feature>
<feature type="active site" description="Proton acceptor" evidence="1">
    <location>
        <position position="248"/>
    </location>
</feature>
<feature type="active site" description="Proton donor" evidence="1">
    <location>
        <position position="270"/>
    </location>
</feature>
<feature type="binding site" evidence="1">
    <location>
        <begin position="22"/>
        <end position="23"/>
    </location>
    <ligand>
        <name>NAD(+)</name>
        <dbReference type="ChEBI" id="CHEBI:57540"/>
    </ligand>
</feature>
<feature type="binding site" evidence="1">
    <location>
        <begin position="43"/>
        <end position="44"/>
    </location>
    <ligand>
        <name>NAD(+)</name>
        <dbReference type="ChEBI" id="CHEBI:57540"/>
    </ligand>
</feature>
<feature type="binding site" evidence="1">
    <location>
        <position position="225"/>
    </location>
    <ligand>
        <name>S-adenosyl-L-methionine</name>
        <dbReference type="ChEBI" id="CHEBI:59789"/>
    </ligand>
</feature>
<feature type="binding site" evidence="1">
    <location>
        <begin position="301"/>
        <end position="303"/>
    </location>
    <ligand>
        <name>S-adenosyl-L-methionine</name>
        <dbReference type="ChEBI" id="CHEBI:59789"/>
    </ligand>
</feature>
<feature type="binding site" evidence="1">
    <location>
        <position position="306"/>
    </location>
    <ligand>
        <name>S-adenosyl-L-methionine</name>
        <dbReference type="ChEBI" id="CHEBI:59789"/>
    </ligand>
</feature>
<feature type="binding site" evidence="1">
    <location>
        <begin position="331"/>
        <end position="332"/>
    </location>
    <ligand>
        <name>S-adenosyl-L-methionine</name>
        <dbReference type="ChEBI" id="CHEBI:59789"/>
    </ligand>
</feature>
<feature type="binding site" evidence="1">
    <location>
        <position position="382"/>
    </location>
    <ligand>
        <name>S-adenosyl-L-methionine</name>
        <dbReference type="ChEBI" id="CHEBI:59789"/>
    </ligand>
</feature>
<feature type="binding site" evidence="1">
    <location>
        <position position="411"/>
    </location>
    <ligand>
        <name>S-adenosyl-L-methionine</name>
        <dbReference type="ChEBI" id="CHEBI:59789"/>
    </ligand>
</feature>
<feature type="modified residue" description="Phosphoserine" evidence="1">
    <location>
        <position position="128"/>
    </location>
</feature>
<comment type="function">
    <text evidence="1">Multifunctional enzyme that catalyzes the SAM-dependent methylations of uroporphyrinogen III at position C-2 and C-7 to form precorrin-2 via precorrin-1. Then it catalyzes the NAD-dependent ring dehydrogenation of precorrin-2 to yield sirohydrochlorin. Finally, it catalyzes the ferrochelation of sirohydrochlorin to yield siroheme.</text>
</comment>
<comment type="catalytic activity">
    <reaction evidence="1">
        <text>uroporphyrinogen III + 2 S-adenosyl-L-methionine = precorrin-2 + 2 S-adenosyl-L-homocysteine + H(+)</text>
        <dbReference type="Rhea" id="RHEA:32459"/>
        <dbReference type="ChEBI" id="CHEBI:15378"/>
        <dbReference type="ChEBI" id="CHEBI:57308"/>
        <dbReference type="ChEBI" id="CHEBI:57856"/>
        <dbReference type="ChEBI" id="CHEBI:58827"/>
        <dbReference type="ChEBI" id="CHEBI:59789"/>
        <dbReference type="EC" id="2.1.1.107"/>
    </reaction>
</comment>
<comment type="catalytic activity">
    <reaction evidence="1">
        <text>precorrin-2 + NAD(+) = sirohydrochlorin + NADH + 2 H(+)</text>
        <dbReference type="Rhea" id="RHEA:15613"/>
        <dbReference type="ChEBI" id="CHEBI:15378"/>
        <dbReference type="ChEBI" id="CHEBI:57540"/>
        <dbReference type="ChEBI" id="CHEBI:57945"/>
        <dbReference type="ChEBI" id="CHEBI:58351"/>
        <dbReference type="ChEBI" id="CHEBI:58827"/>
        <dbReference type="EC" id="1.3.1.76"/>
    </reaction>
</comment>
<comment type="catalytic activity">
    <reaction evidence="1">
        <text>siroheme + 2 H(+) = sirohydrochlorin + Fe(2+)</text>
        <dbReference type="Rhea" id="RHEA:24360"/>
        <dbReference type="ChEBI" id="CHEBI:15378"/>
        <dbReference type="ChEBI" id="CHEBI:29033"/>
        <dbReference type="ChEBI" id="CHEBI:58351"/>
        <dbReference type="ChEBI" id="CHEBI:60052"/>
        <dbReference type="EC" id="4.99.1.4"/>
    </reaction>
</comment>
<comment type="pathway">
    <text evidence="1">Cofactor biosynthesis; adenosylcobalamin biosynthesis; precorrin-2 from uroporphyrinogen III: step 1/1.</text>
</comment>
<comment type="pathway">
    <text evidence="1">Cofactor biosynthesis; adenosylcobalamin biosynthesis; sirohydrochlorin from precorrin-2: step 1/1.</text>
</comment>
<comment type="pathway">
    <text evidence="1">Porphyrin-containing compound metabolism; siroheme biosynthesis; precorrin-2 from uroporphyrinogen III: step 1/1.</text>
</comment>
<comment type="pathway">
    <text evidence="1">Porphyrin-containing compound metabolism; siroheme biosynthesis; siroheme from sirohydrochlorin: step 1/1.</text>
</comment>
<comment type="pathway">
    <text evidence="1">Porphyrin-containing compound metabolism; siroheme biosynthesis; sirohydrochlorin from precorrin-2: step 1/1.</text>
</comment>
<comment type="similarity">
    <text evidence="1">In the N-terminal section; belongs to the precorrin-2 dehydrogenase / sirohydrochlorin ferrochelatase family.</text>
</comment>
<comment type="similarity">
    <text evidence="1">In the C-terminal section; belongs to the precorrin methyltransferase family.</text>
</comment>
<sequence>MDHLPIFCQLRDRDCLIVGGGDVAERKARLLLDAGARLTVNALAFIPQFTAWADAGMLTLVEGPFDESLLDTCWLAIAATDDDALNQRVSEAAEARRIFCNVVDAPKAASFIMPSIIDRSPLMVAVSSGGTSPVLARLLREKLESLLPLHLGQVAKYAGQLRGRVKQQFATMGERRRFWEKLFVNDRLAQSLANNDQKAITETTEQLINEPLDHRGEVVLVGAGPGDAGLLTLKGLQQIQQADVVVYDRLVSDDIMNLVRRDADRVFVGKRAGYHCVPQEEINQILLREAQKGKRVVRLKGGDPFIFGRGGEELETLCNAGIPFSVVPGITAASGCSAYSGIPLTHRDYAQSVRLITGHLKTGGELDWENLAAEKQTLVFYMGLNQAATIQQKLIEHGMPGEMPVAIVENGTAVTQRVIDGTLTQLGELAQQMNSPSLIIIGRVVGLRDKLNWFSNH</sequence>
<accession>C4ZUM4</accession>
<keyword id="KW-0169">Cobalamin biosynthesis</keyword>
<keyword id="KW-0456">Lyase</keyword>
<keyword id="KW-0489">Methyltransferase</keyword>
<keyword id="KW-0511">Multifunctional enzyme</keyword>
<keyword id="KW-0520">NAD</keyword>
<keyword id="KW-0560">Oxidoreductase</keyword>
<keyword id="KW-0597">Phosphoprotein</keyword>
<keyword id="KW-0627">Porphyrin biosynthesis</keyword>
<keyword id="KW-0949">S-adenosyl-L-methionine</keyword>
<keyword id="KW-0808">Transferase</keyword>
<organism>
    <name type="scientific">Escherichia coli (strain K12 / MC4100 / BW2952)</name>
    <dbReference type="NCBI Taxonomy" id="595496"/>
    <lineage>
        <taxon>Bacteria</taxon>
        <taxon>Pseudomonadati</taxon>
        <taxon>Pseudomonadota</taxon>
        <taxon>Gammaproteobacteria</taxon>
        <taxon>Enterobacterales</taxon>
        <taxon>Enterobacteriaceae</taxon>
        <taxon>Escherichia</taxon>
    </lineage>
</organism>
<evidence type="ECO:0000255" key="1">
    <source>
        <dbReference type="HAMAP-Rule" id="MF_01646"/>
    </source>
</evidence>
<gene>
    <name evidence="1" type="primary">cysG</name>
    <name type="ordered locus">BWG_3060</name>
</gene>